<comment type="function">
    <text evidence="2">Catalyzes the reversible phosphorolysis of glucosylglycerate into alpha-D-glucose 1-phosphate (Glc1P) and D-glycerate. May be a regulator of intracellular levels of glucosylglycerate, a compatible solute that primarily protects organisms facing salt stress and very specific nutritional constraints. Cannot catalyze the phosphorolysis of sucrose.</text>
</comment>
<comment type="catalytic activity">
    <reaction evidence="2">
        <text>(2R)-2-O-(alpha-D-glucopyranosyl)-glycerate + phosphate = (R)-glycerate + alpha-D-glucose 1-phosphate</text>
        <dbReference type="Rhea" id="RHEA:55268"/>
        <dbReference type="ChEBI" id="CHEBI:16659"/>
        <dbReference type="ChEBI" id="CHEBI:43474"/>
        <dbReference type="ChEBI" id="CHEBI:58601"/>
        <dbReference type="ChEBI" id="CHEBI:62510"/>
        <dbReference type="EC" id="2.4.1.352"/>
    </reaction>
</comment>
<comment type="biophysicochemical properties">
    <kinetics>
        <KM evidence="2">0.8 mM for D-glycerate (at pH 6.5 and 42 degrees Celsius)</KM>
    </kinetics>
</comment>
<comment type="similarity">
    <text evidence="4">Belongs to the glycosyl hydrolase 13 family. Glucosylglycerate phosphorylase subfamily.</text>
</comment>
<protein>
    <recommendedName>
        <fullName evidence="3">Glucosylglycerate phosphorylase</fullName>
        <shortName evidence="3">GGa phosphorylase</shortName>
        <shortName evidence="3">GGaP</shortName>
        <ecNumber evidence="2">2.4.1.352</ecNumber>
    </recommendedName>
</protein>
<proteinExistence type="evidence at protein level"/>
<keyword id="KW-0119">Carbohydrate metabolism</keyword>
<keyword id="KW-0328">Glycosyltransferase</keyword>
<keyword id="KW-1185">Reference proteome</keyword>
<keyword id="KW-0808">Transferase</keyword>
<evidence type="ECO:0000250" key="1">
    <source>
        <dbReference type="UniProtKB" id="A0ZZH6"/>
    </source>
</evidence>
<evidence type="ECO:0000269" key="2">
    <source>
    </source>
</evidence>
<evidence type="ECO:0000303" key="3">
    <source>
    </source>
</evidence>
<evidence type="ECO:0000305" key="4"/>
<evidence type="ECO:0000312" key="5">
    <source>
        <dbReference type="EMBL" id="AEJ61152.1"/>
    </source>
</evidence>
<gene>
    <name evidence="5" type="ordered locus">Spith_0877</name>
</gene>
<feature type="chain" id="PRO_0000442434" description="Glucosylglycerate phosphorylase">
    <location>
        <begin position="1"/>
        <end position="587"/>
    </location>
</feature>
<feature type="active site" description="Nucleophile" evidence="1">
    <location>
        <position position="236"/>
    </location>
</feature>
<reference key="1">
    <citation type="submission" date="2011-06" db="EMBL/GenBank/DDBJ databases">
        <title>The complete genome of Spirochaeta thermophila DSM 6578.</title>
        <authorList>
            <consortium name="US DOE Joint Genome Institute (JGI-PGF)"/>
            <person name="Lucas S."/>
            <person name="Lapidus A."/>
            <person name="Bruce D."/>
            <person name="Goodwin L."/>
            <person name="Pitluck S."/>
            <person name="Peters L."/>
            <person name="Kyrpides N."/>
            <person name="Mavromatis K."/>
            <person name="Ivanova N."/>
            <person name="Mikailova N."/>
            <person name="Pagani I."/>
            <person name="Chertkov O."/>
            <person name="Detter J.C."/>
            <person name="Tapia R."/>
            <person name="Han C."/>
            <person name="Land M."/>
            <person name="Hauser L."/>
            <person name="Markowitz V."/>
            <person name="Cheng J.-F."/>
            <person name="Hugenholtz P."/>
            <person name="Woyke T."/>
            <person name="Wu D."/>
            <person name="Spring S."/>
            <person name="Merkhoffer B."/>
            <person name="Schneider S."/>
            <person name="Klenk H.-P."/>
            <person name="Eisen J.A."/>
        </authorList>
    </citation>
    <scope>NUCLEOTIDE SEQUENCE [LARGE SCALE GENOMIC DNA]</scope>
    <source>
        <strain>ATCC 700085 / DSM 6578 / Z-1203</strain>
    </source>
</reference>
<reference key="2">
    <citation type="journal article" date="2017" name="Appl. Environ. Microbiol.">
        <title>Glucosylglycerate phosphorylase, an enzyme with novel specificity involved in compatible solute metabolism.</title>
        <authorList>
            <person name="Franceus J."/>
            <person name="Pinel D."/>
            <person name="Desmet T."/>
        </authorList>
    </citation>
    <scope>FUNCTION</scope>
    <scope>CATALYTIC ACTIVITY</scope>
    <scope>SUBSTRATE SPECIFICITY</scope>
    <scope>BIOPHYSICOCHEMICAL PROPERTIES</scope>
</reference>
<dbReference type="EC" id="2.4.1.352" evidence="2"/>
<dbReference type="EMBL" id="CP002903">
    <property type="protein sequence ID" value="AEJ61152.1"/>
    <property type="molecule type" value="Genomic_DNA"/>
</dbReference>
<dbReference type="RefSeq" id="WP_014624526.1">
    <property type="nucleotide sequence ID" value="NC_017583.1"/>
</dbReference>
<dbReference type="SMR" id="G0GBS4"/>
<dbReference type="STRING" id="869211.Spith_0877"/>
<dbReference type="KEGG" id="stq:Spith_0877"/>
<dbReference type="HOGENOM" id="CLU_021358_0_0_12"/>
<dbReference type="OrthoDB" id="9805159at2"/>
<dbReference type="SABIO-RK" id="G0GBS4"/>
<dbReference type="Proteomes" id="UP000007254">
    <property type="component" value="Chromosome"/>
</dbReference>
<dbReference type="GO" id="GO:0016757">
    <property type="term" value="F:glycosyltransferase activity"/>
    <property type="evidence" value="ECO:0007669"/>
    <property type="project" value="UniProtKB-KW"/>
</dbReference>
<dbReference type="GO" id="GO:0005975">
    <property type="term" value="P:carbohydrate metabolic process"/>
    <property type="evidence" value="ECO:0007669"/>
    <property type="project" value="InterPro"/>
</dbReference>
<dbReference type="CDD" id="cd11356">
    <property type="entry name" value="AmyAc_Sucrose_phosphorylase-like_1"/>
    <property type="match status" value="1"/>
</dbReference>
<dbReference type="Gene3D" id="3.20.20.80">
    <property type="entry name" value="Glycosidases"/>
    <property type="match status" value="1"/>
</dbReference>
<dbReference type="Gene3D" id="2.60.40.1180">
    <property type="entry name" value="Golgi alpha-mannosidase II"/>
    <property type="match status" value="1"/>
</dbReference>
<dbReference type="Gene3D" id="3.90.400.10">
    <property type="entry name" value="Oligo-1,6-glucosidase, Domain 2"/>
    <property type="match status" value="1"/>
</dbReference>
<dbReference type="InterPro" id="IPR033746">
    <property type="entry name" value="GGa_phosphorylase"/>
</dbReference>
<dbReference type="InterPro" id="IPR006047">
    <property type="entry name" value="Glyco_hydro_13_cat_dom"/>
</dbReference>
<dbReference type="InterPro" id="IPR013780">
    <property type="entry name" value="Glyco_hydro_b"/>
</dbReference>
<dbReference type="InterPro" id="IPR017853">
    <property type="entry name" value="Glycoside_hydrolase_SF"/>
</dbReference>
<dbReference type="InterPro" id="IPR045857">
    <property type="entry name" value="O16G_dom_2"/>
</dbReference>
<dbReference type="InterPro" id="IPR016377">
    <property type="entry name" value="Sucrose_GGa_phosphorylase-rel"/>
</dbReference>
<dbReference type="PANTHER" id="PTHR38784">
    <property type="entry name" value="SUCROSE PHOSPHORYLASE"/>
    <property type="match status" value="1"/>
</dbReference>
<dbReference type="PANTHER" id="PTHR38784:SF1">
    <property type="entry name" value="SUCROSE PHOSPHORYLASE"/>
    <property type="match status" value="1"/>
</dbReference>
<dbReference type="Pfam" id="PF00128">
    <property type="entry name" value="Alpha-amylase"/>
    <property type="match status" value="1"/>
</dbReference>
<dbReference type="PIRSF" id="PIRSF003059">
    <property type="entry name" value="Sucrose_phosphorylase"/>
    <property type="match status" value="1"/>
</dbReference>
<dbReference type="SMART" id="SM00642">
    <property type="entry name" value="Aamy"/>
    <property type="match status" value="1"/>
</dbReference>
<dbReference type="SUPFAM" id="SSF51445">
    <property type="entry name" value="(Trans)glycosidases"/>
    <property type="match status" value="1"/>
</dbReference>
<sequence>MEPVDRMRELLSFIYGPETGRDTHEALHALLDGWRGRLPSPDEEYASGRLPLDHTDAVLITYGDQFGRKGEAPLATLGEFLREYLSGTMKGVHILPFFPYSSDDGFSVMDYRRVNPEWGTWDDVRRISEDFRLMVDLVLNHCSAKSEWFRRFLQGDPEYEDFFITVEPGTDLSGVFRPRALPLVHEFESAKGPVLVWTTFSRDQVDLNYANPRVLLEMIDIFLFYVSQGAQIIRLDAIAYLWKELGTPCIHHPKTHAVVKLFRAICEEVCPWVLIITETNVPHKENISYFGDMDEAHLVYQFALPPLVLDAFLRKDVSYLREWARTIDTYGGKVSYFNFLASHDGIGVLPARGILPDEYIDAMIEAVKDRGGLISYKSTPQGEVPYELNINYLSAISESHLDRPTRARKFLASQAVMLSLVGMPGIYVHSLLGSENWREGVEKTGMNRTINRQKLSYEGVLEELRDPESLRSMVFEGYLDMLAARRKSRAFDPRGMQEVLEAPETVFALLRRSPDATEEVLCLINVSHIEQECVFPSSIFRTAPDAHLFTELTSGDTLVPYREDEDRFSISLGGYEVLWLTPYRDKG</sequence>
<organism>
    <name type="scientific">Spirochaeta thermophila (strain ATCC 700085 / DSM 6578 / Z-1203)</name>
    <dbReference type="NCBI Taxonomy" id="869211"/>
    <lineage>
        <taxon>Bacteria</taxon>
        <taxon>Pseudomonadati</taxon>
        <taxon>Spirochaetota</taxon>
        <taxon>Spirochaetia</taxon>
        <taxon>Spirochaetales</taxon>
        <taxon>Spirochaetaceae</taxon>
        <taxon>Spirochaeta</taxon>
    </lineage>
</organism>
<accession>G0GBS4</accession>
<name>GGAP_SPITZ</name>